<accession>Q975P2</accession>
<name>DPCKG_SULTO</name>
<gene>
    <name type="ordered locus">STK_03780</name>
</gene>
<reference key="1">
    <citation type="journal article" date="2001" name="DNA Res.">
        <title>Complete genome sequence of an aerobic thermoacidophilic Crenarchaeon, Sulfolobus tokodaii strain7.</title>
        <authorList>
            <person name="Kawarabayasi Y."/>
            <person name="Hino Y."/>
            <person name="Horikawa H."/>
            <person name="Jin-no K."/>
            <person name="Takahashi M."/>
            <person name="Sekine M."/>
            <person name="Baba S."/>
            <person name="Ankai A."/>
            <person name="Kosugi H."/>
            <person name="Hosoyama A."/>
            <person name="Fukui S."/>
            <person name="Nagai Y."/>
            <person name="Nishijima K."/>
            <person name="Otsuka R."/>
            <person name="Nakazawa H."/>
            <person name="Takamiya M."/>
            <person name="Kato Y."/>
            <person name="Yoshizawa T."/>
            <person name="Tanaka T."/>
            <person name="Kudoh Y."/>
            <person name="Yamazaki J."/>
            <person name="Kushida N."/>
            <person name="Oguchi A."/>
            <person name="Aoki K."/>
            <person name="Masuda S."/>
            <person name="Yanagii M."/>
            <person name="Nishimura M."/>
            <person name="Yamagishi A."/>
            <person name="Oshima T."/>
            <person name="Kikuchi H."/>
        </authorList>
    </citation>
    <scope>NUCLEOTIDE SEQUENCE [LARGE SCALE GENOMIC DNA]</scope>
    <source>
        <strain>DSM 16993 / JCM 10545 / NBRC 100140 / 7</strain>
    </source>
</reference>
<protein>
    <recommendedName>
        <fullName evidence="1">GTP-dependent dephospho-CoA kinase</fullName>
        <ecNumber evidence="1">2.7.1.237</ecNumber>
    </recommendedName>
    <alternativeName>
        <fullName evidence="1">Dephospho-coenzyme A kinase</fullName>
        <shortName evidence="1">DPCK</shortName>
    </alternativeName>
</protein>
<comment type="function">
    <text evidence="1">Catalyzes the GTP-dependent phosphorylation of the 3'-hydroxyl group of dephosphocoenzyme A to form coenzyme A (CoA).</text>
</comment>
<comment type="catalytic activity">
    <reaction evidence="1">
        <text>3'-dephospho-CoA + GTP = GDP + CoA + H(+)</text>
        <dbReference type="Rhea" id="RHEA:61156"/>
        <dbReference type="ChEBI" id="CHEBI:15378"/>
        <dbReference type="ChEBI" id="CHEBI:37565"/>
        <dbReference type="ChEBI" id="CHEBI:57287"/>
        <dbReference type="ChEBI" id="CHEBI:57328"/>
        <dbReference type="ChEBI" id="CHEBI:58189"/>
        <dbReference type="EC" id="2.7.1.237"/>
    </reaction>
</comment>
<comment type="pathway">
    <text evidence="1">Cofactor biosynthesis; coenzyme A biosynthesis.</text>
</comment>
<comment type="similarity">
    <text evidence="1">Belongs to the GTP-dependent DPCK family.</text>
</comment>
<organism>
    <name type="scientific">Sulfurisphaera tokodaii (strain DSM 16993 / JCM 10545 / NBRC 100140 / 7)</name>
    <name type="common">Sulfolobus tokodaii</name>
    <dbReference type="NCBI Taxonomy" id="273063"/>
    <lineage>
        <taxon>Archaea</taxon>
        <taxon>Thermoproteota</taxon>
        <taxon>Thermoprotei</taxon>
        <taxon>Sulfolobales</taxon>
        <taxon>Sulfolobaceae</taxon>
        <taxon>Sulfurisphaera</taxon>
    </lineage>
</organism>
<sequence>MPDSIKKELTRPYGFLFTNNDIFINFILEKKNNRLITVGDVVTSTLYDRNIIPFLSIIDGKTKRQIKVKTVNENVIKVKNEKSTIRFSVMKIIKNLLDKNERATILVDGEEDLLVIPVVIFGRNNDIIVYGQPNAGAVVIINNHFVKIRVKQILEKFYVKKC</sequence>
<keyword id="KW-0173">Coenzyme A biosynthesis</keyword>
<keyword id="KW-0342">GTP-binding</keyword>
<keyword id="KW-0418">Kinase</keyword>
<keyword id="KW-0547">Nucleotide-binding</keyword>
<keyword id="KW-1185">Reference proteome</keyword>
<keyword id="KW-0808">Transferase</keyword>
<feature type="chain" id="PRO_0000137620" description="GTP-dependent dephospho-CoA kinase">
    <location>
        <begin position="1"/>
        <end position="162"/>
    </location>
</feature>
<feature type="binding site" evidence="1">
    <location>
        <position position="40"/>
    </location>
    <ligand>
        <name>GTP</name>
        <dbReference type="ChEBI" id="CHEBI:37565"/>
    </ligand>
</feature>
<feature type="binding site" evidence="1">
    <location>
        <position position="41"/>
    </location>
    <ligand>
        <name>GTP</name>
        <dbReference type="ChEBI" id="CHEBI:37565"/>
    </ligand>
</feature>
<feature type="binding site" evidence="1">
    <location>
        <position position="42"/>
    </location>
    <ligand>
        <name>GTP</name>
        <dbReference type="ChEBI" id="CHEBI:37565"/>
    </ligand>
</feature>
<feature type="binding site" evidence="1">
    <location>
        <position position="59"/>
    </location>
    <ligand>
        <name>GTP</name>
        <dbReference type="ChEBI" id="CHEBI:37565"/>
    </ligand>
</feature>
<feature type="binding site" evidence="1">
    <location>
        <position position="61"/>
    </location>
    <ligand>
        <name>GTP</name>
        <dbReference type="ChEBI" id="CHEBI:37565"/>
    </ligand>
</feature>
<feature type="binding site" evidence="1">
    <location>
        <position position="111"/>
    </location>
    <ligand>
        <name>GTP</name>
        <dbReference type="ChEBI" id="CHEBI:37565"/>
    </ligand>
</feature>
<evidence type="ECO:0000255" key="1">
    <source>
        <dbReference type="HAMAP-Rule" id="MF_00590"/>
    </source>
</evidence>
<dbReference type="EC" id="2.7.1.237" evidence="1"/>
<dbReference type="EMBL" id="BA000023">
    <property type="protein sequence ID" value="BAB65358.1"/>
    <property type="molecule type" value="Genomic_DNA"/>
</dbReference>
<dbReference type="RefSeq" id="WP_010978341.1">
    <property type="nucleotide sequence ID" value="NC_003106.2"/>
</dbReference>
<dbReference type="SMR" id="Q975P2"/>
<dbReference type="STRING" id="273063.STK_03780"/>
<dbReference type="GeneID" id="1458302"/>
<dbReference type="KEGG" id="sto:STK_03780"/>
<dbReference type="PATRIC" id="fig|273063.9.peg.438"/>
<dbReference type="eggNOG" id="arCOG04076">
    <property type="taxonomic scope" value="Archaea"/>
</dbReference>
<dbReference type="OrthoDB" id="15447at2157"/>
<dbReference type="UniPathway" id="UPA00241"/>
<dbReference type="Proteomes" id="UP000001015">
    <property type="component" value="Chromosome"/>
</dbReference>
<dbReference type="GO" id="GO:0005525">
    <property type="term" value="F:GTP binding"/>
    <property type="evidence" value="ECO:0007669"/>
    <property type="project" value="UniProtKB-UniRule"/>
</dbReference>
<dbReference type="GO" id="GO:0016301">
    <property type="term" value="F:kinase activity"/>
    <property type="evidence" value="ECO:0007669"/>
    <property type="project" value="UniProtKB-UniRule"/>
</dbReference>
<dbReference type="GO" id="GO:0015937">
    <property type="term" value="P:coenzyme A biosynthetic process"/>
    <property type="evidence" value="ECO:0007669"/>
    <property type="project" value="UniProtKB-UniRule"/>
</dbReference>
<dbReference type="HAMAP" id="MF_00590">
    <property type="entry name" value="Dephospho_CoA_kinase_GTP_dep"/>
    <property type="match status" value="1"/>
</dbReference>
<dbReference type="InterPro" id="IPR007164">
    <property type="entry name" value="GTP-dep_dephospho-CoA_kin"/>
</dbReference>
<dbReference type="PANTHER" id="PTHR40732:SF1">
    <property type="entry name" value="GTP-DEPENDENT DEPHOSPHO-COA KINASE"/>
    <property type="match status" value="1"/>
</dbReference>
<dbReference type="PANTHER" id="PTHR40732">
    <property type="entry name" value="UPF0218 PROTEIN TK1697"/>
    <property type="match status" value="1"/>
</dbReference>
<dbReference type="Pfam" id="PF04019">
    <property type="entry name" value="DUF359"/>
    <property type="match status" value="1"/>
</dbReference>
<dbReference type="PIRSF" id="PIRSF006533">
    <property type="entry name" value="UCP006533"/>
    <property type="match status" value="1"/>
</dbReference>
<proteinExistence type="inferred from homology"/>